<name>ATG17_VANPO</name>
<keyword id="KW-0072">Autophagy</keyword>
<keyword id="KW-0175">Coiled coil</keyword>
<keyword id="KW-0963">Cytoplasm</keyword>
<keyword id="KW-0472">Membrane</keyword>
<keyword id="KW-1185">Reference proteome</keyword>
<dbReference type="EMBL" id="DS480419">
    <property type="protein sequence ID" value="EDO16682.1"/>
    <property type="molecule type" value="Genomic_DNA"/>
</dbReference>
<dbReference type="RefSeq" id="XP_001644540.1">
    <property type="nucleotide sequence ID" value="XM_001644490.1"/>
</dbReference>
<dbReference type="SMR" id="A7TM40"/>
<dbReference type="FunCoup" id="A7TM40">
    <property type="interactions" value="181"/>
</dbReference>
<dbReference type="STRING" id="436907.A7TM40"/>
<dbReference type="GeneID" id="5544838"/>
<dbReference type="KEGG" id="vpo:Kpol_1052p29"/>
<dbReference type="eggNOG" id="ENOG502QQDW">
    <property type="taxonomic scope" value="Eukaryota"/>
</dbReference>
<dbReference type="HOGENOM" id="CLU_051526_0_0_1"/>
<dbReference type="InParanoid" id="A7TM40"/>
<dbReference type="OMA" id="PENIWPN"/>
<dbReference type="OrthoDB" id="1937984at2759"/>
<dbReference type="Proteomes" id="UP000000267">
    <property type="component" value="Unassembled WGS sequence"/>
</dbReference>
<dbReference type="GO" id="GO:1990316">
    <property type="term" value="C:Atg1/ULK1 kinase complex"/>
    <property type="evidence" value="ECO:0007669"/>
    <property type="project" value="EnsemblFungi"/>
</dbReference>
<dbReference type="GO" id="GO:0034045">
    <property type="term" value="C:phagophore assembly site membrane"/>
    <property type="evidence" value="ECO:0007669"/>
    <property type="project" value="UniProtKB-SubCell"/>
</dbReference>
<dbReference type="GO" id="GO:0120095">
    <property type="term" value="C:vacuole-isolation membrane contact site"/>
    <property type="evidence" value="ECO:0007669"/>
    <property type="project" value="EnsemblFungi"/>
</dbReference>
<dbReference type="GO" id="GO:0060090">
    <property type="term" value="F:molecular adaptor activity"/>
    <property type="evidence" value="ECO:0007669"/>
    <property type="project" value="EnsemblFungi"/>
</dbReference>
<dbReference type="GO" id="GO:0030295">
    <property type="term" value="F:protein kinase activator activity"/>
    <property type="evidence" value="ECO:0007669"/>
    <property type="project" value="EnsemblFungi"/>
</dbReference>
<dbReference type="GO" id="GO:0000149">
    <property type="term" value="F:SNARE binding"/>
    <property type="evidence" value="ECO:0007669"/>
    <property type="project" value="EnsemblFungi"/>
</dbReference>
<dbReference type="GO" id="GO:0000422">
    <property type="term" value="P:autophagy of mitochondrion"/>
    <property type="evidence" value="ECO:0007669"/>
    <property type="project" value="EnsemblFungi"/>
</dbReference>
<dbReference type="GO" id="GO:0006995">
    <property type="term" value="P:cellular response to nitrogen starvation"/>
    <property type="evidence" value="ECO:0007669"/>
    <property type="project" value="EnsemblFungi"/>
</dbReference>
<dbReference type="GO" id="GO:0000425">
    <property type="term" value="P:pexophagy"/>
    <property type="evidence" value="ECO:0007669"/>
    <property type="project" value="EnsemblFungi"/>
</dbReference>
<dbReference type="GO" id="GO:0034727">
    <property type="term" value="P:piecemeal microautophagy of the nucleus"/>
    <property type="evidence" value="ECO:0007669"/>
    <property type="project" value="EnsemblFungi"/>
</dbReference>
<dbReference type="GO" id="GO:2000786">
    <property type="term" value="P:positive regulation of autophagosome assembly"/>
    <property type="evidence" value="ECO:0007669"/>
    <property type="project" value="EnsemblFungi"/>
</dbReference>
<dbReference type="GO" id="GO:0045772">
    <property type="term" value="P:positive regulation of autophagosome size"/>
    <property type="evidence" value="ECO:0007669"/>
    <property type="project" value="EnsemblFungi"/>
</dbReference>
<dbReference type="GO" id="GO:0034497">
    <property type="term" value="P:protein localization to phagophore assembly site"/>
    <property type="evidence" value="ECO:0007669"/>
    <property type="project" value="EnsemblFungi"/>
</dbReference>
<dbReference type="InterPro" id="IPR007240">
    <property type="entry name" value="Atg17"/>
</dbReference>
<dbReference type="InterPro" id="IPR045326">
    <property type="entry name" value="ATG17-like_dom"/>
</dbReference>
<dbReference type="PANTHER" id="PTHR28005">
    <property type="entry name" value="AUTOPHAGY-RELATED PROTEIN 17"/>
    <property type="match status" value="1"/>
</dbReference>
<dbReference type="PANTHER" id="PTHR28005:SF1">
    <property type="entry name" value="AUTOPHAGY-RELATED PROTEIN 17"/>
    <property type="match status" value="1"/>
</dbReference>
<dbReference type="Pfam" id="PF04108">
    <property type="entry name" value="ATG17_like"/>
    <property type="match status" value="1"/>
</dbReference>
<sequence length="413" mass="48447">MKIERFVNASRKTLVEAQVLCQDANSRISNARSSFSHWERSISKIRFLLNCLKNQGSFIKNCILKVGIEENLIEKEWTQSILVDLAKELKYWNSKINEQVRVLDSIENILDEDTKSESKNLGYFVSRDNLDILEKRLKEIPNVKYHIDNIRGQYNTMFKKVSNYLINKRLKSVQEYFLTNFENDSDDIKKLTTTLPSKLVSLEHDLADYLSSITNHYDQSKLLQTLKPADPDYTDLLEVVKNDNSELDGIVTLLRETVDEVDETLKTFLGIFNEIELKQKECNKLLFGVIEEFKINHEYLLIFNDISSLIDNFKETCIEDINNTRSLCIFYQKFEIGYQNLLFEIERRKTVAQKMTDIIKNCELELSKINEEDQKNRSEFLKLNGDYLPENIWPGKIDDFSPLYSLEYSIKEI</sequence>
<evidence type="ECO:0000250" key="1"/>
<evidence type="ECO:0000305" key="2"/>
<reference key="1">
    <citation type="journal article" date="2007" name="Proc. Natl. Acad. Sci. U.S.A.">
        <title>Independent sorting-out of thousands of duplicated gene pairs in two yeast species descended from a whole-genome duplication.</title>
        <authorList>
            <person name="Scannell D.R."/>
            <person name="Frank A.C."/>
            <person name="Conant G.C."/>
            <person name="Byrne K.P."/>
            <person name="Woolfit M."/>
            <person name="Wolfe K.H."/>
        </authorList>
    </citation>
    <scope>NUCLEOTIDE SEQUENCE [LARGE SCALE GENOMIC DNA]</scope>
    <source>
        <strain>ATCC 22028 / DSM 70294 / BCRC 21397 / CBS 2163 / NBRC 10782 / NRRL Y-8283 / UCD 57-17</strain>
    </source>
</reference>
<protein>
    <recommendedName>
        <fullName>Autophagy-related protein 17</fullName>
    </recommendedName>
</protein>
<organism>
    <name type="scientific">Vanderwaltozyma polyspora (strain ATCC 22028 / DSM 70294 / BCRC 21397 / CBS 2163 / NBRC 10782 / NRRL Y-8283 / UCD 57-17)</name>
    <name type="common">Kluyveromyces polysporus</name>
    <dbReference type="NCBI Taxonomy" id="436907"/>
    <lineage>
        <taxon>Eukaryota</taxon>
        <taxon>Fungi</taxon>
        <taxon>Dikarya</taxon>
        <taxon>Ascomycota</taxon>
        <taxon>Saccharomycotina</taxon>
        <taxon>Saccharomycetes</taxon>
        <taxon>Saccharomycetales</taxon>
        <taxon>Saccharomycetaceae</taxon>
        <taxon>Vanderwaltozyma</taxon>
    </lineage>
</organism>
<proteinExistence type="inferred from homology"/>
<gene>
    <name type="primary">ATG17</name>
    <name type="ORF">Kpol_1052p29</name>
</gene>
<feature type="chain" id="PRO_0000317989" description="Autophagy-related protein 17">
    <location>
        <begin position="1"/>
        <end position="413"/>
    </location>
</feature>
<comment type="function">
    <text evidence="1">Autophagy-specific protein that functions in response to autophagy-inducing signals as a scaffold to recruit other ATG proteins to organize pre-autophagosomal structure (PAS) formation. Modulates the timing and magnitude of the autophagy response, such as the size of the sequestering vesicles. Plays particularly a role in pexophagy and nucleophagy (By similarity).</text>
</comment>
<comment type="subcellular location">
    <subcellularLocation>
        <location evidence="1">Cytoplasm</location>
    </subcellularLocation>
    <subcellularLocation>
        <location evidence="1">Preautophagosomal structure membrane</location>
        <topology evidence="1">Peripheral membrane protein</topology>
    </subcellularLocation>
</comment>
<comment type="similarity">
    <text evidence="2">Belongs to the ATG17 family.</text>
</comment>
<accession>A7TM40</accession>